<comment type="function">
    <text evidence="1">Bidirectionally degrades single-stranded DNA into large acid-insoluble oligonucleotides, which are then degraded further into small acid-soluble oligonucleotides.</text>
</comment>
<comment type="catalytic activity">
    <reaction evidence="1">
        <text>Exonucleolytic cleavage in either 5'- to 3'- or 3'- to 5'-direction to yield nucleoside 5'-phosphates.</text>
        <dbReference type="EC" id="3.1.11.6"/>
    </reaction>
</comment>
<comment type="subunit">
    <text evidence="1">Heterooligomer composed of large and small subunits.</text>
</comment>
<comment type="subcellular location">
    <subcellularLocation>
        <location evidence="1">Cytoplasm</location>
    </subcellularLocation>
</comment>
<comment type="similarity">
    <text evidence="1">Belongs to the XseB family.</text>
</comment>
<accession>A4YQ37</accession>
<sequence length="83" mass="9274">MADNTVADVKKLSFERAIEELESIVKRLEDGKVPLEESVTIYERGEALKRRCEELLRQAEARVEKITTDASGRATGTAPLDVQ</sequence>
<reference key="1">
    <citation type="journal article" date="2007" name="Science">
        <title>Legumes symbioses: absence of nod genes in photosynthetic bradyrhizobia.</title>
        <authorList>
            <person name="Giraud E."/>
            <person name="Moulin L."/>
            <person name="Vallenet D."/>
            <person name="Barbe V."/>
            <person name="Cytryn E."/>
            <person name="Avarre J.-C."/>
            <person name="Jaubert M."/>
            <person name="Simon D."/>
            <person name="Cartieaux F."/>
            <person name="Prin Y."/>
            <person name="Bena G."/>
            <person name="Hannibal L."/>
            <person name="Fardoux J."/>
            <person name="Kojadinovic M."/>
            <person name="Vuillet L."/>
            <person name="Lajus A."/>
            <person name="Cruveiller S."/>
            <person name="Rouy Z."/>
            <person name="Mangenot S."/>
            <person name="Segurens B."/>
            <person name="Dossat C."/>
            <person name="Franck W.L."/>
            <person name="Chang W.-S."/>
            <person name="Saunders E."/>
            <person name="Bruce D."/>
            <person name="Richardson P."/>
            <person name="Normand P."/>
            <person name="Dreyfus B."/>
            <person name="Pignol D."/>
            <person name="Stacey G."/>
            <person name="Emerich D."/>
            <person name="Vermeglio A."/>
            <person name="Medigue C."/>
            <person name="Sadowsky M."/>
        </authorList>
    </citation>
    <scope>NUCLEOTIDE SEQUENCE [LARGE SCALE GENOMIC DNA]</scope>
    <source>
        <strain>ORS 278</strain>
    </source>
</reference>
<organism>
    <name type="scientific">Bradyrhizobium sp. (strain ORS 278)</name>
    <dbReference type="NCBI Taxonomy" id="114615"/>
    <lineage>
        <taxon>Bacteria</taxon>
        <taxon>Pseudomonadati</taxon>
        <taxon>Pseudomonadota</taxon>
        <taxon>Alphaproteobacteria</taxon>
        <taxon>Hyphomicrobiales</taxon>
        <taxon>Nitrobacteraceae</taxon>
        <taxon>Bradyrhizobium</taxon>
    </lineage>
</organism>
<protein>
    <recommendedName>
        <fullName evidence="1">Exodeoxyribonuclease 7 small subunit</fullName>
        <ecNumber evidence="1">3.1.11.6</ecNumber>
    </recommendedName>
    <alternativeName>
        <fullName evidence="1">Exodeoxyribonuclease VII small subunit</fullName>
        <shortName evidence="1">Exonuclease VII small subunit</shortName>
    </alternativeName>
</protein>
<name>EX7S_BRASO</name>
<feature type="chain" id="PRO_0000303692" description="Exodeoxyribonuclease 7 small subunit">
    <location>
        <begin position="1"/>
        <end position="83"/>
    </location>
</feature>
<gene>
    <name evidence="1" type="primary">xseB</name>
    <name type="ordered locus">BRADO2164</name>
</gene>
<dbReference type="EC" id="3.1.11.6" evidence="1"/>
<dbReference type="EMBL" id="CU234118">
    <property type="protein sequence ID" value="CAL76013.1"/>
    <property type="molecule type" value="Genomic_DNA"/>
</dbReference>
<dbReference type="RefSeq" id="WP_006611439.1">
    <property type="nucleotide sequence ID" value="NC_009445.1"/>
</dbReference>
<dbReference type="SMR" id="A4YQ37"/>
<dbReference type="STRING" id="114615.BRADO2164"/>
<dbReference type="KEGG" id="bra:BRADO2164"/>
<dbReference type="eggNOG" id="COG1722">
    <property type="taxonomic scope" value="Bacteria"/>
</dbReference>
<dbReference type="HOGENOM" id="CLU_145918_0_3_5"/>
<dbReference type="OrthoDB" id="9808145at2"/>
<dbReference type="Proteomes" id="UP000001994">
    <property type="component" value="Chromosome"/>
</dbReference>
<dbReference type="GO" id="GO:0005829">
    <property type="term" value="C:cytosol"/>
    <property type="evidence" value="ECO:0007669"/>
    <property type="project" value="TreeGrafter"/>
</dbReference>
<dbReference type="GO" id="GO:0009318">
    <property type="term" value="C:exodeoxyribonuclease VII complex"/>
    <property type="evidence" value="ECO:0007669"/>
    <property type="project" value="InterPro"/>
</dbReference>
<dbReference type="GO" id="GO:0008855">
    <property type="term" value="F:exodeoxyribonuclease VII activity"/>
    <property type="evidence" value="ECO:0007669"/>
    <property type="project" value="UniProtKB-UniRule"/>
</dbReference>
<dbReference type="GO" id="GO:0006308">
    <property type="term" value="P:DNA catabolic process"/>
    <property type="evidence" value="ECO:0007669"/>
    <property type="project" value="UniProtKB-UniRule"/>
</dbReference>
<dbReference type="FunFam" id="1.10.287.1040:FF:000004">
    <property type="entry name" value="Exodeoxyribonuclease 7 small subunit"/>
    <property type="match status" value="1"/>
</dbReference>
<dbReference type="Gene3D" id="1.10.287.1040">
    <property type="entry name" value="Exonuclease VII, small subunit"/>
    <property type="match status" value="1"/>
</dbReference>
<dbReference type="HAMAP" id="MF_00337">
    <property type="entry name" value="Exonuc_7_S"/>
    <property type="match status" value="1"/>
</dbReference>
<dbReference type="InterPro" id="IPR003761">
    <property type="entry name" value="Exonuc_VII_S"/>
</dbReference>
<dbReference type="InterPro" id="IPR037004">
    <property type="entry name" value="Exonuc_VII_ssu_sf"/>
</dbReference>
<dbReference type="NCBIfam" id="NF002139">
    <property type="entry name" value="PRK00977.1-3"/>
    <property type="match status" value="1"/>
</dbReference>
<dbReference type="NCBIfam" id="NF002140">
    <property type="entry name" value="PRK00977.1-4"/>
    <property type="match status" value="1"/>
</dbReference>
<dbReference type="NCBIfam" id="TIGR01280">
    <property type="entry name" value="xseB"/>
    <property type="match status" value="1"/>
</dbReference>
<dbReference type="PANTHER" id="PTHR34137">
    <property type="entry name" value="EXODEOXYRIBONUCLEASE 7 SMALL SUBUNIT"/>
    <property type="match status" value="1"/>
</dbReference>
<dbReference type="PANTHER" id="PTHR34137:SF1">
    <property type="entry name" value="EXODEOXYRIBONUCLEASE 7 SMALL SUBUNIT"/>
    <property type="match status" value="1"/>
</dbReference>
<dbReference type="Pfam" id="PF02609">
    <property type="entry name" value="Exonuc_VII_S"/>
    <property type="match status" value="1"/>
</dbReference>
<dbReference type="PIRSF" id="PIRSF006488">
    <property type="entry name" value="Exonuc_VII_S"/>
    <property type="match status" value="1"/>
</dbReference>
<dbReference type="SUPFAM" id="SSF116842">
    <property type="entry name" value="XseB-like"/>
    <property type="match status" value="1"/>
</dbReference>
<proteinExistence type="inferred from homology"/>
<keyword id="KW-0963">Cytoplasm</keyword>
<keyword id="KW-0269">Exonuclease</keyword>
<keyword id="KW-0378">Hydrolase</keyword>
<keyword id="KW-0540">Nuclease</keyword>
<keyword id="KW-1185">Reference proteome</keyword>
<evidence type="ECO:0000255" key="1">
    <source>
        <dbReference type="HAMAP-Rule" id="MF_00337"/>
    </source>
</evidence>